<organism>
    <name type="scientific">Protobothrops elegans</name>
    <name type="common">Elegant pitviper</name>
    <name type="synonym">Trimeresurus elegans</name>
    <dbReference type="NCBI Taxonomy" id="88086"/>
    <lineage>
        <taxon>Eukaryota</taxon>
        <taxon>Metazoa</taxon>
        <taxon>Chordata</taxon>
        <taxon>Craniata</taxon>
        <taxon>Vertebrata</taxon>
        <taxon>Euteleostomi</taxon>
        <taxon>Lepidosauria</taxon>
        <taxon>Squamata</taxon>
        <taxon>Bifurcata</taxon>
        <taxon>Unidentata</taxon>
        <taxon>Episquamata</taxon>
        <taxon>Toxicofera</taxon>
        <taxon>Serpentes</taxon>
        <taxon>Colubroidea</taxon>
        <taxon>Viperidae</taxon>
        <taxon>Crotalinae</taxon>
        <taxon>Protobothrops</taxon>
    </lineage>
</organism>
<feature type="signal peptide" evidence="3">
    <location>
        <begin position="1"/>
        <end position="20"/>
    </location>
</feature>
<feature type="propeptide" id="PRO_0000028987" evidence="2">
    <location>
        <begin position="21"/>
        <end position="190"/>
    </location>
</feature>
<feature type="chain" id="PRO_0000028988" description="Snake venom metalloproteinase" evidence="1">
    <location>
        <begin position="191"/>
        <end position="392"/>
    </location>
</feature>
<feature type="propeptide" id="PRO_0000028989" evidence="6">
    <location>
        <begin position="393"/>
        <end position="408"/>
    </location>
</feature>
<feature type="chain" id="PRO_0000028990" description="Disintegrin elegantin-2a">
    <location>
        <begin position="409"/>
        <end position="481"/>
    </location>
</feature>
<feature type="chain" id="PRO_0000028991" description="Disintegrin elegantin-2d">
    <location>
        <begin position="409"/>
        <end position="480"/>
    </location>
</feature>
<feature type="chain" id="PRO_0000028992" description="Disintegrin elegantin-2b">
    <location>
        <begin position="410"/>
        <end position="481"/>
    </location>
</feature>
<feature type="chain" id="PRO_0000028993" description="Disintegrin elegantin-2e">
    <location>
        <begin position="410"/>
        <end position="480"/>
    </location>
</feature>
<feature type="chain" id="PRO_0000028994" description="Disintegrin elegantin-2c">
    <location>
        <begin position="411"/>
        <end position="481"/>
    </location>
</feature>
<feature type="chain" id="PRO_0000028995" description="Disintegrin elegantin-2f">
    <location>
        <begin position="411"/>
        <end position="480"/>
    </location>
</feature>
<feature type="domain" description="Peptidase M12B" evidence="5">
    <location>
        <begin position="197"/>
        <end position="392"/>
    </location>
</feature>
<feature type="domain" description="Disintegrin" evidence="4">
    <location>
        <begin position="400"/>
        <end position="481"/>
    </location>
</feature>
<feature type="short sequence motif" description="Cell attachment site">
    <location>
        <begin position="459"/>
        <end position="461"/>
    </location>
</feature>
<feature type="active site" evidence="2 5">
    <location>
        <position position="334"/>
    </location>
</feature>
<feature type="binding site" evidence="5">
    <location>
        <position position="333"/>
    </location>
    <ligand>
        <name>Zn(2+)</name>
        <dbReference type="ChEBI" id="CHEBI:29105"/>
        <note>catalytic</note>
    </ligand>
</feature>
<feature type="binding site" evidence="5">
    <location>
        <position position="337"/>
    </location>
    <ligand>
        <name>Zn(2+)</name>
        <dbReference type="ChEBI" id="CHEBI:29105"/>
        <note>catalytic</note>
    </ligand>
</feature>
<feature type="binding site" evidence="5">
    <location>
        <position position="343"/>
    </location>
    <ligand>
        <name>Zn(2+)</name>
        <dbReference type="ChEBI" id="CHEBI:29105"/>
        <note>catalytic</note>
    </ligand>
</feature>
<feature type="disulfide bond" evidence="5">
    <location>
        <begin position="308"/>
        <end position="387"/>
    </location>
</feature>
<feature type="disulfide bond" evidence="5">
    <location>
        <begin position="349"/>
        <end position="371"/>
    </location>
</feature>
<feature type="disulfide bond" evidence="5">
    <location>
        <begin position="351"/>
        <end position="354"/>
    </location>
</feature>
<feature type="disulfide bond" evidence="2">
    <location>
        <begin position="414"/>
        <end position="429"/>
    </location>
</feature>
<feature type="disulfide bond" evidence="2">
    <location>
        <begin position="416"/>
        <end position="424"/>
    </location>
</feature>
<feature type="disulfide bond" evidence="2">
    <location>
        <begin position="423"/>
        <end position="446"/>
    </location>
</feature>
<feature type="disulfide bond" evidence="2">
    <location>
        <begin position="437"/>
        <end position="443"/>
    </location>
</feature>
<feature type="disulfide bond" evidence="2">
    <location>
        <begin position="442"/>
        <end position="467"/>
    </location>
</feature>
<feature type="disulfide bond" evidence="2 4">
    <location>
        <begin position="455"/>
        <end position="474"/>
    </location>
</feature>
<dbReference type="EC" id="3.4.24.-"/>
<dbReference type="EMBL" id="AB059572">
    <property type="protein sequence ID" value="BAB69658.1"/>
    <property type="molecule type" value="mRNA"/>
</dbReference>
<dbReference type="SMR" id="Q90YA6"/>
<dbReference type="MEROPS" id="M12.157"/>
<dbReference type="GO" id="GO:0005576">
    <property type="term" value="C:extracellular region"/>
    <property type="evidence" value="ECO:0007669"/>
    <property type="project" value="UniProtKB-SubCell"/>
</dbReference>
<dbReference type="GO" id="GO:0005886">
    <property type="term" value="C:plasma membrane"/>
    <property type="evidence" value="ECO:0007669"/>
    <property type="project" value="TreeGrafter"/>
</dbReference>
<dbReference type="GO" id="GO:0046872">
    <property type="term" value="F:metal ion binding"/>
    <property type="evidence" value="ECO:0007669"/>
    <property type="project" value="UniProtKB-KW"/>
</dbReference>
<dbReference type="GO" id="GO:0004222">
    <property type="term" value="F:metalloendopeptidase activity"/>
    <property type="evidence" value="ECO:0007669"/>
    <property type="project" value="InterPro"/>
</dbReference>
<dbReference type="GO" id="GO:0090729">
    <property type="term" value="F:toxin activity"/>
    <property type="evidence" value="ECO:0007669"/>
    <property type="project" value="UniProtKB-KW"/>
</dbReference>
<dbReference type="GO" id="GO:0006508">
    <property type="term" value="P:proteolysis"/>
    <property type="evidence" value="ECO:0007669"/>
    <property type="project" value="UniProtKB-KW"/>
</dbReference>
<dbReference type="CDD" id="cd04269">
    <property type="entry name" value="ZnMc_adamalysin_II_like"/>
    <property type="match status" value="1"/>
</dbReference>
<dbReference type="FunFam" id="3.40.390.10:FF:000002">
    <property type="entry name" value="Disintegrin and metalloproteinase domain-containing protein 22"/>
    <property type="match status" value="1"/>
</dbReference>
<dbReference type="FunFam" id="4.10.70.10:FF:000005">
    <property type="entry name" value="Zinc metalloproteinase/disintegrin"/>
    <property type="match status" value="1"/>
</dbReference>
<dbReference type="Gene3D" id="3.40.390.10">
    <property type="entry name" value="Collagenase (Catalytic Domain)"/>
    <property type="match status" value="1"/>
</dbReference>
<dbReference type="Gene3D" id="4.10.70.10">
    <property type="entry name" value="Disintegrin domain"/>
    <property type="match status" value="1"/>
</dbReference>
<dbReference type="InterPro" id="IPR018358">
    <property type="entry name" value="Disintegrin_CS"/>
</dbReference>
<dbReference type="InterPro" id="IPR001762">
    <property type="entry name" value="Disintegrin_dom"/>
</dbReference>
<dbReference type="InterPro" id="IPR036436">
    <property type="entry name" value="Disintegrin_dom_sf"/>
</dbReference>
<dbReference type="InterPro" id="IPR024079">
    <property type="entry name" value="MetalloPept_cat_dom_sf"/>
</dbReference>
<dbReference type="InterPro" id="IPR001590">
    <property type="entry name" value="Peptidase_M12B"/>
</dbReference>
<dbReference type="InterPro" id="IPR002870">
    <property type="entry name" value="Peptidase_M12B_N"/>
</dbReference>
<dbReference type="InterPro" id="IPR034027">
    <property type="entry name" value="Reprolysin_adamalysin"/>
</dbReference>
<dbReference type="PANTHER" id="PTHR11905">
    <property type="entry name" value="ADAM A DISINTEGRIN AND METALLOPROTEASE DOMAIN"/>
    <property type="match status" value="1"/>
</dbReference>
<dbReference type="PANTHER" id="PTHR11905:SF32">
    <property type="entry name" value="DISINTEGRIN AND METALLOPROTEINASE DOMAIN-CONTAINING PROTEIN 28"/>
    <property type="match status" value="1"/>
</dbReference>
<dbReference type="Pfam" id="PF00200">
    <property type="entry name" value="Disintegrin"/>
    <property type="match status" value="1"/>
</dbReference>
<dbReference type="Pfam" id="PF01562">
    <property type="entry name" value="Pep_M12B_propep"/>
    <property type="match status" value="1"/>
</dbReference>
<dbReference type="Pfam" id="PF01421">
    <property type="entry name" value="Reprolysin"/>
    <property type="match status" value="1"/>
</dbReference>
<dbReference type="PRINTS" id="PR00289">
    <property type="entry name" value="DISINTEGRIN"/>
</dbReference>
<dbReference type="SMART" id="SM00050">
    <property type="entry name" value="DISIN"/>
    <property type="match status" value="1"/>
</dbReference>
<dbReference type="SUPFAM" id="SSF57552">
    <property type="entry name" value="Blood coagulation inhibitor (disintegrin)"/>
    <property type="match status" value="1"/>
</dbReference>
<dbReference type="SUPFAM" id="SSF55486">
    <property type="entry name" value="Metalloproteases ('zincins'), catalytic domain"/>
    <property type="match status" value="1"/>
</dbReference>
<dbReference type="PROSITE" id="PS50215">
    <property type="entry name" value="ADAM_MEPRO"/>
    <property type="match status" value="1"/>
</dbReference>
<dbReference type="PROSITE" id="PS00427">
    <property type="entry name" value="DISINTEGRIN_1"/>
    <property type="match status" value="1"/>
</dbReference>
<dbReference type="PROSITE" id="PS50214">
    <property type="entry name" value="DISINTEGRIN_2"/>
    <property type="match status" value="1"/>
</dbReference>
<dbReference type="PROSITE" id="PS00142">
    <property type="entry name" value="ZINC_PROTEASE"/>
    <property type="match status" value="1"/>
</dbReference>
<evidence type="ECO:0000250" key="1"/>
<evidence type="ECO:0000250" key="2">
    <source>
        <dbReference type="UniProtKB" id="P18619"/>
    </source>
</evidence>
<evidence type="ECO:0000255" key="3"/>
<evidence type="ECO:0000255" key="4">
    <source>
        <dbReference type="PROSITE-ProRule" id="PRU00068"/>
    </source>
</evidence>
<evidence type="ECO:0000255" key="5">
    <source>
        <dbReference type="PROSITE-ProRule" id="PRU00276"/>
    </source>
</evidence>
<evidence type="ECO:0000269" key="6">
    <source>
    </source>
</evidence>
<evidence type="ECO:0000305" key="7"/>
<comment type="function">
    <molecule>Snake venom metalloproteinase</molecule>
    <text evidence="1">Impairs hemostasis in the envenomed animal.</text>
</comment>
<comment type="function">
    <text evidence="1">Disintegrin elegantin-2a-f: inhibits platelet aggregation induced by ADP, thrombin, platelet-activating factor and collagen. Acts by inhibiting fibrinogen interaction with platelet receptors GPIIb/GPIIIa (ITGA2B/ITGB3) (By similarity).</text>
</comment>
<comment type="cofactor">
    <cofactor evidence="1">
        <name>Zn(2+)</name>
        <dbReference type="ChEBI" id="CHEBI:29105"/>
    </cofactor>
    <text evidence="1">Binds 1 zinc ion per subunit.</text>
</comment>
<comment type="subunit">
    <text evidence="1">Monomer.</text>
</comment>
<comment type="subcellular location">
    <subcellularLocation>
        <location evidence="2">Secreted</location>
    </subcellularLocation>
</comment>
<comment type="tissue specificity">
    <text>Expressed by the venom gland.</text>
</comment>
<comment type="mass spectrometry">
    <molecule>Disintegrin elegantin-2a</molecule>
    <text>Isoform 2a.</text>
</comment>
<comment type="mass spectrometry">
    <molecule>Disintegrin elegantin-2b</molecule>
    <text>Isoform 2b.</text>
</comment>
<comment type="mass spectrometry">
    <molecule>Disintegrin elegantin-2c</molecule>
    <text>Isoform 2c.</text>
</comment>
<comment type="mass spectrometry">
    <molecule>Disintegrin elegantin-2d</molecule>
    <text>Isoform 2d.</text>
</comment>
<comment type="mass spectrometry">
    <molecule>Disintegrin elegantin-2e</molecule>
    <text>Isoform 2e.</text>
</comment>
<comment type="mass spectrometry">
    <molecule>Disintegrin elegantin-2f</molecule>
    <text>Isoform 2f.</text>
</comment>
<comment type="miscellaneous">
    <text>The disintegrins belong to the medium disintegrin subfamily.</text>
</comment>
<comment type="miscellaneous">
    <text>The sequence shown is that of elegantin-2a.</text>
</comment>
<comment type="similarity">
    <text evidence="7">Belongs to the venom metalloproteinase (M12B) family. P-II subfamily. P-IIa sub-subfamily.</text>
</comment>
<name>VM2E2_PROEL</name>
<reference key="1">
    <citation type="submission" date="2001-10" db="EMBL/GenBank/DDBJ databases">
        <authorList>
            <person name="Murayama N."/>
            <person name="Shimosaka S."/>
        </authorList>
    </citation>
    <scope>NUCLEOTIDE SEQUENCE [MRNA]</scope>
    <source>
        <tissue>Venom gland</tissue>
    </source>
</reference>
<reference key="2">
    <citation type="journal article" date="1996" name="Biochem. J.">
        <title>Amino acid sequence and molecular modelling of glycoprotein IIb-IIIa and fibronectin receptor iso-antagonists from Trimeresurus elegans venom.</title>
        <authorList>
            <person name="Scaloni A."/>
            <person name="Di Martino E."/>
            <person name="Miraglia N."/>
            <person name="Pelagalli A."/>
            <person name="Della Morte R."/>
            <person name="Staiano N."/>
            <person name="Pucci P."/>
        </authorList>
    </citation>
    <scope>PROTEIN SEQUENCE OF 409-481</scope>
    <scope>MASS SPECTROMETRY</scope>
    <source>
        <tissue>Venom</tissue>
    </source>
</reference>
<proteinExistence type="evidence at protein level"/>
<protein>
    <recommendedName>
        <fullName>Zinc metalloproteinase/disintegrin</fullName>
    </recommendedName>
    <component>
        <recommendedName>
            <fullName>Snake venom metalloproteinase</fullName>
            <shortName>SVMP</shortName>
            <ecNumber>3.4.24.-</ecNumber>
        </recommendedName>
    </component>
    <component>
        <recommendedName>
            <fullName>Disintegrin elegantin-2a</fullName>
        </recommendedName>
    </component>
    <component>
        <recommendedName>
            <fullName>Disintegrin elegantin-2b</fullName>
        </recommendedName>
    </component>
    <component>
        <recommendedName>
            <fullName>Disintegrin elegantin-2c</fullName>
        </recommendedName>
    </component>
    <component>
        <recommendedName>
            <fullName>Disintegrin elegantin-2d</fullName>
        </recommendedName>
    </component>
    <component>
        <recommendedName>
            <fullName>Disintegrin elegantin-2e</fullName>
        </recommendedName>
    </component>
    <component>
        <recommendedName>
            <fullName>Disintegrin elegantin-2f</fullName>
        </recommendedName>
    </component>
</protein>
<accession>Q90YA6</accession>
<accession>Q9PSM3</accession>
<sequence>MIQVLLVTICLAVFPYQGSSIILESGNVDDYEVVYPRKVTALPKGAVQPKYEDAMQYEFKVNGEAVVLHLEKNKGLFSEDYSETHYSPDGREITTYPSVEDHCYYHGRIHNDADSTASISACDGLKGYFKLQGETYLIEPLELSDSEAHAVFKYENVEKEDEAPKMCGVTQNWESDESIKKASQLYLTPEQQRFPQRYIKLAIVVDHGMYTKYSSNFKKIRKRVHQMVSNINEMCRPLNIAITLALLDVWSEKDFITVQADAPTTAGLFGDWRERVLLKKKNHDHAQLLTDTNFARNTIGWAYLGRMCDEKYSVGVVQDHSSKVFMVAVTMTHELGHNLGMEHDDKDKCKCEACIMSAVISDKQSKLFSDCSKDYYQTFLTNDNPQCILNAPLRTDTVSTPVSGNEFLEAGEECDCGSPENPCCDAATCKLRPGAQCADGLCCDQCRFIEEGIICRRARGDDLDDYCNGISGDCPRNPFHA</sequence>
<keyword id="KW-1217">Cell adhesion impairing toxin</keyword>
<keyword id="KW-0903">Direct protein sequencing</keyword>
<keyword id="KW-1015">Disulfide bond</keyword>
<keyword id="KW-1199">Hemostasis impairing toxin</keyword>
<keyword id="KW-0378">Hydrolase</keyword>
<keyword id="KW-0479">Metal-binding</keyword>
<keyword id="KW-0482">Metalloprotease</keyword>
<keyword id="KW-1201">Platelet aggregation inhibiting toxin</keyword>
<keyword id="KW-0645">Protease</keyword>
<keyword id="KW-0964">Secreted</keyword>
<keyword id="KW-0732">Signal</keyword>
<keyword id="KW-0800">Toxin</keyword>
<keyword id="KW-0862">Zinc</keyword>
<keyword id="KW-0865">Zymogen</keyword>